<sequence length="387" mass="41170">MDLFEYQAKELFAKHNVPTTPGRVTDTAEDAKAIAEEIGKPVMVKAQVKVGGRGKAGGVKYAATADDAFTHAQNILGLDIKGHVVKKLLVAEASDIAEEYYISFLLDRANRTYLAMCSVEGGVEIEEVAATKPDRLARIPVDATKGVDEAFAREIAEKGHLPAEVLDAAAVTIAKLWEVFVGEDATLVEVNPLVRTPDDQILALDGKVTLDANADFRHPEHAEFEDRDATDPLELKAKENDLNYVKLDGQVGIIGNGAGLVMSTLDVVAYAGEKHNGVKPANFLDIGGGASAEVMANGLDVILNDSQVKSVFVNVFGGITACDAVANGIVKALEILGEEANKPLVVRLDGNRVEEGRKILADANHPLVVLAQTMDEGADKAAELANK</sequence>
<feature type="chain" id="PRO_1000082131" description="Succinate--CoA ligase [ADP-forming] subunit beta">
    <location>
        <begin position="1"/>
        <end position="387"/>
    </location>
</feature>
<feature type="domain" description="ATP-grasp" evidence="1">
    <location>
        <begin position="9"/>
        <end position="236"/>
    </location>
</feature>
<feature type="binding site" evidence="1">
    <location>
        <position position="45"/>
    </location>
    <ligand>
        <name>ATP</name>
        <dbReference type="ChEBI" id="CHEBI:30616"/>
    </ligand>
</feature>
<feature type="binding site" evidence="1">
    <location>
        <begin position="52"/>
        <end position="54"/>
    </location>
    <ligand>
        <name>ATP</name>
        <dbReference type="ChEBI" id="CHEBI:30616"/>
    </ligand>
</feature>
<feature type="binding site" evidence="1">
    <location>
        <position position="94"/>
    </location>
    <ligand>
        <name>ATP</name>
        <dbReference type="ChEBI" id="CHEBI:30616"/>
    </ligand>
</feature>
<feature type="binding site" evidence="1">
    <location>
        <position position="99"/>
    </location>
    <ligand>
        <name>ATP</name>
        <dbReference type="ChEBI" id="CHEBI:30616"/>
    </ligand>
</feature>
<feature type="binding site" evidence="1">
    <location>
        <position position="191"/>
    </location>
    <ligand>
        <name>Mg(2+)</name>
        <dbReference type="ChEBI" id="CHEBI:18420"/>
    </ligand>
</feature>
<feature type="binding site" evidence="1">
    <location>
        <position position="205"/>
    </location>
    <ligand>
        <name>Mg(2+)</name>
        <dbReference type="ChEBI" id="CHEBI:18420"/>
    </ligand>
</feature>
<feature type="binding site" evidence="1">
    <location>
        <position position="256"/>
    </location>
    <ligand>
        <name>substrate</name>
        <note>ligand shared with subunit alpha</note>
    </ligand>
</feature>
<feature type="binding site" evidence="1">
    <location>
        <begin position="318"/>
        <end position="320"/>
    </location>
    <ligand>
        <name>substrate</name>
        <note>ligand shared with subunit alpha</note>
    </ligand>
</feature>
<comment type="function">
    <text evidence="1">Succinyl-CoA synthetase functions in the citric acid cycle (TCA), coupling the hydrolysis of succinyl-CoA to the synthesis of either ATP or GTP and thus represents the only step of substrate-level phosphorylation in the TCA. The beta subunit provides nucleotide specificity of the enzyme and binds the substrate succinate, while the binding sites for coenzyme A and phosphate are found in the alpha subunit.</text>
</comment>
<comment type="catalytic activity">
    <reaction evidence="1">
        <text>succinate + ATP + CoA = succinyl-CoA + ADP + phosphate</text>
        <dbReference type="Rhea" id="RHEA:17661"/>
        <dbReference type="ChEBI" id="CHEBI:30031"/>
        <dbReference type="ChEBI" id="CHEBI:30616"/>
        <dbReference type="ChEBI" id="CHEBI:43474"/>
        <dbReference type="ChEBI" id="CHEBI:57287"/>
        <dbReference type="ChEBI" id="CHEBI:57292"/>
        <dbReference type="ChEBI" id="CHEBI:456216"/>
        <dbReference type="EC" id="6.2.1.5"/>
    </reaction>
    <physiologicalReaction direction="right-to-left" evidence="1">
        <dbReference type="Rhea" id="RHEA:17663"/>
    </physiologicalReaction>
</comment>
<comment type="catalytic activity">
    <reaction evidence="1">
        <text>GTP + succinate + CoA = succinyl-CoA + GDP + phosphate</text>
        <dbReference type="Rhea" id="RHEA:22120"/>
        <dbReference type="ChEBI" id="CHEBI:30031"/>
        <dbReference type="ChEBI" id="CHEBI:37565"/>
        <dbReference type="ChEBI" id="CHEBI:43474"/>
        <dbReference type="ChEBI" id="CHEBI:57287"/>
        <dbReference type="ChEBI" id="CHEBI:57292"/>
        <dbReference type="ChEBI" id="CHEBI:58189"/>
    </reaction>
    <physiologicalReaction direction="right-to-left" evidence="1">
        <dbReference type="Rhea" id="RHEA:22122"/>
    </physiologicalReaction>
</comment>
<comment type="cofactor">
    <cofactor evidence="1">
        <name>Mg(2+)</name>
        <dbReference type="ChEBI" id="CHEBI:18420"/>
    </cofactor>
    <text evidence="1">Binds 1 Mg(2+) ion per subunit.</text>
</comment>
<comment type="pathway">
    <text evidence="1">Carbohydrate metabolism; tricarboxylic acid cycle; succinate from succinyl-CoA (ligase route): step 1/1.</text>
</comment>
<comment type="subunit">
    <text evidence="1">Heterotetramer of two alpha and two beta subunits.</text>
</comment>
<comment type="similarity">
    <text evidence="1">Belongs to the succinate/malate CoA ligase beta subunit family.</text>
</comment>
<accession>Q1B3V2</accession>
<dbReference type="EC" id="6.2.1.5" evidence="1"/>
<dbReference type="EMBL" id="CP000384">
    <property type="protein sequence ID" value="ABG10432.1"/>
    <property type="molecule type" value="Genomic_DNA"/>
</dbReference>
<dbReference type="SMR" id="Q1B3V2"/>
<dbReference type="KEGG" id="mmc:Mmcs_4327"/>
<dbReference type="HOGENOM" id="CLU_037430_0_2_11"/>
<dbReference type="BioCyc" id="MSP164756:G1G6O-4420-MONOMER"/>
<dbReference type="UniPathway" id="UPA00223">
    <property type="reaction ID" value="UER00999"/>
</dbReference>
<dbReference type="GO" id="GO:0005829">
    <property type="term" value="C:cytosol"/>
    <property type="evidence" value="ECO:0007669"/>
    <property type="project" value="TreeGrafter"/>
</dbReference>
<dbReference type="GO" id="GO:0042709">
    <property type="term" value="C:succinate-CoA ligase complex"/>
    <property type="evidence" value="ECO:0007669"/>
    <property type="project" value="TreeGrafter"/>
</dbReference>
<dbReference type="GO" id="GO:0005524">
    <property type="term" value="F:ATP binding"/>
    <property type="evidence" value="ECO:0007669"/>
    <property type="project" value="UniProtKB-UniRule"/>
</dbReference>
<dbReference type="GO" id="GO:0000287">
    <property type="term" value="F:magnesium ion binding"/>
    <property type="evidence" value="ECO:0007669"/>
    <property type="project" value="UniProtKB-UniRule"/>
</dbReference>
<dbReference type="GO" id="GO:0004775">
    <property type="term" value="F:succinate-CoA ligase (ADP-forming) activity"/>
    <property type="evidence" value="ECO:0007669"/>
    <property type="project" value="UniProtKB-UniRule"/>
</dbReference>
<dbReference type="GO" id="GO:0004776">
    <property type="term" value="F:succinate-CoA ligase (GDP-forming) activity"/>
    <property type="evidence" value="ECO:0007669"/>
    <property type="project" value="RHEA"/>
</dbReference>
<dbReference type="GO" id="GO:0006104">
    <property type="term" value="P:succinyl-CoA metabolic process"/>
    <property type="evidence" value="ECO:0007669"/>
    <property type="project" value="TreeGrafter"/>
</dbReference>
<dbReference type="GO" id="GO:0006099">
    <property type="term" value="P:tricarboxylic acid cycle"/>
    <property type="evidence" value="ECO:0007669"/>
    <property type="project" value="UniProtKB-UniRule"/>
</dbReference>
<dbReference type="FunFam" id="3.30.1490.20:FF:000014">
    <property type="entry name" value="Succinate--CoA ligase [ADP-forming] subunit beta"/>
    <property type="match status" value="1"/>
</dbReference>
<dbReference type="FunFam" id="3.30.470.20:FF:000002">
    <property type="entry name" value="Succinate--CoA ligase [ADP-forming] subunit beta"/>
    <property type="match status" value="1"/>
</dbReference>
<dbReference type="FunFam" id="3.40.50.261:FF:000007">
    <property type="entry name" value="Succinate--CoA ligase [ADP-forming] subunit beta"/>
    <property type="match status" value="1"/>
</dbReference>
<dbReference type="Gene3D" id="3.30.1490.20">
    <property type="entry name" value="ATP-grasp fold, A domain"/>
    <property type="match status" value="1"/>
</dbReference>
<dbReference type="Gene3D" id="3.30.470.20">
    <property type="entry name" value="ATP-grasp fold, B domain"/>
    <property type="match status" value="1"/>
</dbReference>
<dbReference type="Gene3D" id="3.40.50.261">
    <property type="entry name" value="Succinyl-CoA synthetase domains"/>
    <property type="match status" value="1"/>
</dbReference>
<dbReference type="HAMAP" id="MF_00558">
    <property type="entry name" value="Succ_CoA_beta"/>
    <property type="match status" value="1"/>
</dbReference>
<dbReference type="InterPro" id="IPR011761">
    <property type="entry name" value="ATP-grasp"/>
</dbReference>
<dbReference type="InterPro" id="IPR013650">
    <property type="entry name" value="ATP-grasp_succ-CoA_synth-type"/>
</dbReference>
<dbReference type="InterPro" id="IPR013815">
    <property type="entry name" value="ATP_grasp_subdomain_1"/>
</dbReference>
<dbReference type="InterPro" id="IPR017866">
    <property type="entry name" value="Succ-CoA_synthase_bsu_CS"/>
</dbReference>
<dbReference type="InterPro" id="IPR005811">
    <property type="entry name" value="SUCC_ACL_C"/>
</dbReference>
<dbReference type="InterPro" id="IPR005809">
    <property type="entry name" value="Succ_CoA_ligase-like_bsu"/>
</dbReference>
<dbReference type="InterPro" id="IPR016102">
    <property type="entry name" value="Succinyl-CoA_synth-like"/>
</dbReference>
<dbReference type="NCBIfam" id="NF001913">
    <property type="entry name" value="PRK00696.1"/>
    <property type="match status" value="1"/>
</dbReference>
<dbReference type="NCBIfam" id="TIGR01016">
    <property type="entry name" value="sucCoAbeta"/>
    <property type="match status" value="1"/>
</dbReference>
<dbReference type="PANTHER" id="PTHR11815:SF10">
    <property type="entry name" value="SUCCINATE--COA LIGASE [GDP-FORMING] SUBUNIT BETA, MITOCHONDRIAL"/>
    <property type="match status" value="1"/>
</dbReference>
<dbReference type="PANTHER" id="PTHR11815">
    <property type="entry name" value="SUCCINYL-COA SYNTHETASE BETA CHAIN"/>
    <property type="match status" value="1"/>
</dbReference>
<dbReference type="Pfam" id="PF08442">
    <property type="entry name" value="ATP-grasp_2"/>
    <property type="match status" value="1"/>
</dbReference>
<dbReference type="Pfam" id="PF00549">
    <property type="entry name" value="Ligase_CoA"/>
    <property type="match status" value="1"/>
</dbReference>
<dbReference type="PIRSF" id="PIRSF001554">
    <property type="entry name" value="SucCS_beta"/>
    <property type="match status" value="1"/>
</dbReference>
<dbReference type="SUPFAM" id="SSF56059">
    <property type="entry name" value="Glutathione synthetase ATP-binding domain-like"/>
    <property type="match status" value="1"/>
</dbReference>
<dbReference type="SUPFAM" id="SSF52210">
    <property type="entry name" value="Succinyl-CoA synthetase domains"/>
    <property type="match status" value="1"/>
</dbReference>
<dbReference type="PROSITE" id="PS50975">
    <property type="entry name" value="ATP_GRASP"/>
    <property type="match status" value="1"/>
</dbReference>
<dbReference type="PROSITE" id="PS01217">
    <property type="entry name" value="SUCCINYL_COA_LIG_3"/>
    <property type="match status" value="1"/>
</dbReference>
<gene>
    <name evidence="1" type="primary">sucC</name>
    <name type="ordered locus">Mmcs_4327</name>
</gene>
<organism>
    <name type="scientific">Mycobacterium sp. (strain MCS)</name>
    <dbReference type="NCBI Taxonomy" id="164756"/>
    <lineage>
        <taxon>Bacteria</taxon>
        <taxon>Bacillati</taxon>
        <taxon>Actinomycetota</taxon>
        <taxon>Actinomycetes</taxon>
        <taxon>Mycobacteriales</taxon>
        <taxon>Mycobacteriaceae</taxon>
        <taxon>Mycobacterium</taxon>
    </lineage>
</organism>
<evidence type="ECO:0000255" key="1">
    <source>
        <dbReference type="HAMAP-Rule" id="MF_00558"/>
    </source>
</evidence>
<name>SUCC_MYCSS</name>
<keyword id="KW-0067">ATP-binding</keyword>
<keyword id="KW-0436">Ligase</keyword>
<keyword id="KW-0460">Magnesium</keyword>
<keyword id="KW-0479">Metal-binding</keyword>
<keyword id="KW-0547">Nucleotide-binding</keyword>
<keyword id="KW-0816">Tricarboxylic acid cycle</keyword>
<reference key="1">
    <citation type="submission" date="2006-06" db="EMBL/GenBank/DDBJ databases">
        <title>Complete sequence of chromosome of Mycobacterium sp. MCS.</title>
        <authorList>
            <consortium name="US DOE Joint Genome Institute"/>
            <person name="Copeland A."/>
            <person name="Lucas S."/>
            <person name="Lapidus A."/>
            <person name="Barry K."/>
            <person name="Detter J.C."/>
            <person name="Glavina del Rio T."/>
            <person name="Hammon N."/>
            <person name="Israni S."/>
            <person name="Dalin E."/>
            <person name="Tice H."/>
            <person name="Pitluck S."/>
            <person name="Martinez M."/>
            <person name="Schmutz J."/>
            <person name="Larimer F."/>
            <person name="Land M."/>
            <person name="Hauser L."/>
            <person name="Kyrpides N."/>
            <person name="Kim E."/>
            <person name="Miller C.D."/>
            <person name="Hughes J.E."/>
            <person name="Anderson A.J."/>
            <person name="Sims R.C."/>
            <person name="Richardson P."/>
        </authorList>
    </citation>
    <scope>NUCLEOTIDE SEQUENCE [LARGE SCALE GENOMIC DNA]</scope>
    <source>
        <strain>MCS</strain>
    </source>
</reference>
<proteinExistence type="inferred from homology"/>
<protein>
    <recommendedName>
        <fullName evidence="1">Succinate--CoA ligase [ADP-forming] subunit beta</fullName>
        <ecNumber evidence="1">6.2.1.5</ecNumber>
    </recommendedName>
    <alternativeName>
        <fullName evidence="1">Succinyl-CoA synthetase subunit beta</fullName>
        <shortName evidence="1">SCS-beta</shortName>
    </alternativeName>
</protein>